<name>RL5_BURP6</name>
<proteinExistence type="inferred from homology"/>
<organism>
    <name type="scientific">Burkholderia pseudomallei (strain 668)</name>
    <dbReference type="NCBI Taxonomy" id="320373"/>
    <lineage>
        <taxon>Bacteria</taxon>
        <taxon>Pseudomonadati</taxon>
        <taxon>Pseudomonadota</taxon>
        <taxon>Betaproteobacteria</taxon>
        <taxon>Burkholderiales</taxon>
        <taxon>Burkholderiaceae</taxon>
        <taxon>Burkholderia</taxon>
        <taxon>pseudomallei group</taxon>
    </lineage>
</organism>
<sequence length="179" mass="20027">MARFQEFYKEKVVPGLIEKFGYKSVMEVPRITKITLNMGLGEAVADKKIIENAVGDLTKIAGQKPVVTKARKAIAGFKIRQGYPIGAMVTLRGRAMYEFLDRFVTVALPRVRDFRGVSGRAFDGRGNYNIGVKEQIIFPEIDYDKIDALRGLNISITTTAKTDDEAKALLASFKFPFRN</sequence>
<accession>A3NEG7</accession>
<feature type="chain" id="PRO_1000052708" description="Large ribosomal subunit protein uL5">
    <location>
        <begin position="1"/>
        <end position="179"/>
    </location>
</feature>
<protein>
    <recommendedName>
        <fullName evidence="1">Large ribosomal subunit protein uL5</fullName>
    </recommendedName>
    <alternativeName>
        <fullName evidence="2">50S ribosomal protein L5</fullName>
    </alternativeName>
</protein>
<reference key="1">
    <citation type="journal article" date="2010" name="Genome Biol. Evol.">
        <title>Continuing evolution of Burkholderia mallei through genome reduction and large-scale rearrangements.</title>
        <authorList>
            <person name="Losada L."/>
            <person name="Ronning C.M."/>
            <person name="DeShazer D."/>
            <person name="Woods D."/>
            <person name="Fedorova N."/>
            <person name="Kim H.S."/>
            <person name="Shabalina S.A."/>
            <person name="Pearson T.R."/>
            <person name="Brinkac L."/>
            <person name="Tan P."/>
            <person name="Nandi T."/>
            <person name="Crabtree J."/>
            <person name="Badger J."/>
            <person name="Beckstrom-Sternberg S."/>
            <person name="Saqib M."/>
            <person name="Schutzer S.E."/>
            <person name="Keim P."/>
            <person name="Nierman W.C."/>
        </authorList>
    </citation>
    <scope>NUCLEOTIDE SEQUENCE [LARGE SCALE GENOMIC DNA]</scope>
    <source>
        <strain>668</strain>
    </source>
</reference>
<evidence type="ECO:0000255" key="1">
    <source>
        <dbReference type="HAMAP-Rule" id="MF_01333"/>
    </source>
</evidence>
<evidence type="ECO:0000305" key="2"/>
<comment type="function">
    <text evidence="1">This is one of the proteins that bind and probably mediate the attachment of the 5S RNA into the large ribosomal subunit, where it forms part of the central protuberance. In the 70S ribosome it contacts protein S13 of the 30S subunit (bridge B1b), connecting the 2 subunits; this bridge is implicated in subunit movement. Contacts the P site tRNA; the 5S rRNA and some of its associated proteins might help stabilize positioning of ribosome-bound tRNAs.</text>
</comment>
<comment type="subunit">
    <text evidence="1">Part of the 50S ribosomal subunit; part of the 5S rRNA/L5/L18/L25 subcomplex. Contacts the 5S rRNA and the P site tRNA. Forms a bridge to the 30S subunit in the 70S ribosome.</text>
</comment>
<comment type="similarity">
    <text evidence="1">Belongs to the universal ribosomal protein uL5 family.</text>
</comment>
<dbReference type="EMBL" id="CP000570">
    <property type="protein sequence ID" value="ABN82244.1"/>
    <property type="molecule type" value="Genomic_DNA"/>
</dbReference>
<dbReference type="RefSeq" id="WP_004202757.1">
    <property type="nucleotide sequence ID" value="NC_009074.1"/>
</dbReference>
<dbReference type="SMR" id="A3NEG7"/>
<dbReference type="GeneID" id="93061820"/>
<dbReference type="KEGG" id="bpd:BURPS668_3734"/>
<dbReference type="HOGENOM" id="CLU_061015_2_1_4"/>
<dbReference type="GO" id="GO:1990904">
    <property type="term" value="C:ribonucleoprotein complex"/>
    <property type="evidence" value="ECO:0007669"/>
    <property type="project" value="UniProtKB-KW"/>
</dbReference>
<dbReference type="GO" id="GO:0005840">
    <property type="term" value="C:ribosome"/>
    <property type="evidence" value="ECO:0007669"/>
    <property type="project" value="UniProtKB-KW"/>
</dbReference>
<dbReference type="GO" id="GO:0019843">
    <property type="term" value="F:rRNA binding"/>
    <property type="evidence" value="ECO:0007669"/>
    <property type="project" value="UniProtKB-UniRule"/>
</dbReference>
<dbReference type="GO" id="GO:0003735">
    <property type="term" value="F:structural constituent of ribosome"/>
    <property type="evidence" value="ECO:0007669"/>
    <property type="project" value="InterPro"/>
</dbReference>
<dbReference type="GO" id="GO:0000049">
    <property type="term" value="F:tRNA binding"/>
    <property type="evidence" value="ECO:0007669"/>
    <property type="project" value="UniProtKB-UniRule"/>
</dbReference>
<dbReference type="GO" id="GO:0006412">
    <property type="term" value="P:translation"/>
    <property type="evidence" value="ECO:0007669"/>
    <property type="project" value="UniProtKB-UniRule"/>
</dbReference>
<dbReference type="FunFam" id="3.30.1440.10:FF:000001">
    <property type="entry name" value="50S ribosomal protein L5"/>
    <property type="match status" value="1"/>
</dbReference>
<dbReference type="Gene3D" id="3.30.1440.10">
    <property type="match status" value="1"/>
</dbReference>
<dbReference type="HAMAP" id="MF_01333_B">
    <property type="entry name" value="Ribosomal_uL5_B"/>
    <property type="match status" value="1"/>
</dbReference>
<dbReference type="InterPro" id="IPR002132">
    <property type="entry name" value="Ribosomal_uL5"/>
</dbReference>
<dbReference type="InterPro" id="IPR020930">
    <property type="entry name" value="Ribosomal_uL5_bac-type"/>
</dbReference>
<dbReference type="InterPro" id="IPR031309">
    <property type="entry name" value="Ribosomal_uL5_C"/>
</dbReference>
<dbReference type="InterPro" id="IPR020929">
    <property type="entry name" value="Ribosomal_uL5_CS"/>
</dbReference>
<dbReference type="InterPro" id="IPR022803">
    <property type="entry name" value="Ribosomal_uL5_dom_sf"/>
</dbReference>
<dbReference type="InterPro" id="IPR031310">
    <property type="entry name" value="Ribosomal_uL5_N"/>
</dbReference>
<dbReference type="NCBIfam" id="NF000585">
    <property type="entry name" value="PRK00010.1"/>
    <property type="match status" value="1"/>
</dbReference>
<dbReference type="PANTHER" id="PTHR11994">
    <property type="entry name" value="60S RIBOSOMAL PROTEIN L11-RELATED"/>
    <property type="match status" value="1"/>
</dbReference>
<dbReference type="Pfam" id="PF00281">
    <property type="entry name" value="Ribosomal_L5"/>
    <property type="match status" value="1"/>
</dbReference>
<dbReference type="Pfam" id="PF00673">
    <property type="entry name" value="Ribosomal_L5_C"/>
    <property type="match status" value="1"/>
</dbReference>
<dbReference type="PIRSF" id="PIRSF002161">
    <property type="entry name" value="Ribosomal_L5"/>
    <property type="match status" value="1"/>
</dbReference>
<dbReference type="SUPFAM" id="SSF55282">
    <property type="entry name" value="RL5-like"/>
    <property type="match status" value="1"/>
</dbReference>
<dbReference type="PROSITE" id="PS00358">
    <property type="entry name" value="RIBOSOMAL_L5"/>
    <property type="match status" value="1"/>
</dbReference>
<keyword id="KW-0687">Ribonucleoprotein</keyword>
<keyword id="KW-0689">Ribosomal protein</keyword>
<keyword id="KW-0694">RNA-binding</keyword>
<keyword id="KW-0699">rRNA-binding</keyword>
<keyword id="KW-0820">tRNA-binding</keyword>
<gene>
    <name evidence="1" type="primary">rplE</name>
    <name type="ordered locus">BURPS668_3734</name>
</gene>